<evidence type="ECO:0000255" key="1">
    <source>
        <dbReference type="HAMAP-Rule" id="MF_01400"/>
    </source>
</evidence>
<evidence type="ECO:0000255" key="2">
    <source>
        <dbReference type="PROSITE-ProRule" id="PRU01126"/>
    </source>
</evidence>
<comment type="catalytic activity">
    <reaction evidence="1">
        <text>L-methionyl-[protein] + [thioredoxin]-disulfide + H2O = L-methionyl-(R)-S-oxide-[protein] + [thioredoxin]-dithiol</text>
        <dbReference type="Rhea" id="RHEA:24164"/>
        <dbReference type="Rhea" id="RHEA-COMP:10698"/>
        <dbReference type="Rhea" id="RHEA-COMP:10700"/>
        <dbReference type="Rhea" id="RHEA-COMP:12313"/>
        <dbReference type="Rhea" id="RHEA-COMP:12314"/>
        <dbReference type="ChEBI" id="CHEBI:15377"/>
        <dbReference type="ChEBI" id="CHEBI:16044"/>
        <dbReference type="ChEBI" id="CHEBI:29950"/>
        <dbReference type="ChEBI" id="CHEBI:45764"/>
        <dbReference type="ChEBI" id="CHEBI:50058"/>
        <dbReference type="EC" id="1.8.4.12"/>
    </reaction>
</comment>
<comment type="cofactor">
    <cofactor evidence="1">
        <name>Zn(2+)</name>
        <dbReference type="ChEBI" id="CHEBI:29105"/>
    </cofactor>
    <text evidence="1">Binds 1 zinc ion per subunit. The zinc ion is important for the structural integrity of the protein.</text>
</comment>
<comment type="similarity">
    <text evidence="1">Belongs to the MsrB Met sulfoxide reductase family.</text>
</comment>
<gene>
    <name evidence="1" type="primary">msrB</name>
    <name type="ordered locus">MM_1634</name>
</gene>
<accession>Q8PWF5</accession>
<protein>
    <recommendedName>
        <fullName evidence="1">Peptide methionine sulfoxide reductase MsrB</fullName>
        <ecNumber evidence="1">1.8.4.12</ecNumber>
    </recommendedName>
    <alternativeName>
        <fullName evidence="1">Peptide-methionine (R)-S-oxide reductase</fullName>
    </alternativeName>
</protein>
<dbReference type="EC" id="1.8.4.12" evidence="1"/>
<dbReference type="EMBL" id="AE008384">
    <property type="protein sequence ID" value="AAM31330.1"/>
    <property type="molecule type" value="Genomic_DNA"/>
</dbReference>
<dbReference type="RefSeq" id="WP_011033577.1">
    <property type="nucleotide sequence ID" value="NC_003901.1"/>
</dbReference>
<dbReference type="SMR" id="Q8PWF5"/>
<dbReference type="GeneID" id="82160689"/>
<dbReference type="KEGG" id="mma:MM_1634"/>
<dbReference type="PATRIC" id="fig|192952.21.peg.1893"/>
<dbReference type="eggNOG" id="arCOG02815">
    <property type="taxonomic scope" value="Archaea"/>
</dbReference>
<dbReference type="HOGENOM" id="CLU_031040_8_4_2"/>
<dbReference type="Proteomes" id="UP000000595">
    <property type="component" value="Chromosome"/>
</dbReference>
<dbReference type="GO" id="GO:0005737">
    <property type="term" value="C:cytoplasm"/>
    <property type="evidence" value="ECO:0007669"/>
    <property type="project" value="TreeGrafter"/>
</dbReference>
<dbReference type="GO" id="GO:0033743">
    <property type="term" value="F:peptide-methionine (R)-S-oxide reductase activity"/>
    <property type="evidence" value="ECO:0007669"/>
    <property type="project" value="UniProtKB-UniRule"/>
</dbReference>
<dbReference type="GO" id="GO:0008270">
    <property type="term" value="F:zinc ion binding"/>
    <property type="evidence" value="ECO:0007669"/>
    <property type="project" value="UniProtKB-UniRule"/>
</dbReference>
<dbReference type="GO" id="GO:0030091">
    <property type="term" value="P:protein repair"/>
    <property type="evidence" value="ECO:0007669"/>
    <property type="project" value="InterPro"/>
</dbReference>
<dbReference type="GO" id="GO:0006979">
    <property type="term" value="P:response to oxidative stress"/>
    <property type="evidence" value="ECO:0007669"/>
    <property type="project" value="InterPro"/>
</dbReference>
<dbReference type="FunFam" id="2.170.150.20:FF:000001">
    <property type="entry name" value="Peptide methionine sulfoxide reductase MsrB"/>
    <property type="match status" value="1"/>
</dbReference>
<dbReference type="Gene3D" id="2.170.150.20">
    <property type="entry name" value="Peptide methionine sulfoxide reductase"/>
    <property type="match status" value="1"/>
</dbReference>
<dbReference type="HAMAP" id="MF_01400">
    <property type="entry name" value="MsrB"/>
    <property type="match status" value="1"/>
</dbReference>
<dbReference type="InterPro" id="IPR028427">
    <property type="entry name" value="Met_Sox_Rdtase_MsrB"/>
</dbReference>
<dbReference type="InterPro" id="IPR002579">
    <property type="entry name" value="Met_Sox_Rdtase_MsrB_dom"/>
</dbReference>
<dbReference type="InterPro" id="IPR011057">
    <property type="entry name" value="Mss4-like_sf"/>
</dbReference>
<dbReference type="NCBIfam" id="TIGR00357">
    <property type="entry name" value="peptide-methionine (R)-S-oxide reductase MsrB"/>
    <property type="match status" value="1"/>
</dbReference>
<dbReference type="PANTHER" id="PTHR10173">
    <property type="entry name" value="METHIONINE SULFOXIDE REDUCTASE"/>
    <property type="match status" value="1"/>
</dbReference>
<dbReference type="PANTHER" id="PTHR10173:SF52">
    <property type="entry name" value="METHIONINE-R-SULFOXIDE REDUCTASE B1"/>
    <property type="match status" value="1"/>
</dbReference>
<dbReference type="Pfam" id="PF01641">
    <property type="entry name" value="SelR"/>
    <property type="match status" value="1"/>
</dbReference>
<dbReference type="SUPFAM" id="SSF51316">
    <property type="entry name" value="Mss4-like"/>
    <property type="match status" value="1"/>
</dbReference>
<dbReference type="PROSITE" id="PS51790">
    <property type="entry name" value="MSRB"/>
    <property type="match status" value="1"/>
</dbReference>
<name>MSRB_METMA</name>
<reference key="1">
    <citation type="journal article" date="2002" name="J. Mol. Microbiol. Biotechnol.">
        <title>The genome of Methanosarcina mazei: evidence for lateral gene transfer between Bacteria and Archaea.</title>
        <authorList>
            <person name="Deppenmeier U."/>
            <person name="Johann A."/>
            <person name="Hartsch T."/>
            <person name="Merkl R."/>
            <person name="Schmitz R.A."/>
            <person name="Martinez-Arias R."/>
            <person name="Henne A."/>
            <person name="Wiezer A."/>
            <person name="Baeumer S."/>
            <person name="Jacobi C."/>
            <person name="Brueggemann H."/>
            <person name="Lienard T."/>
            <person name="Christmann A."/>
            <person name="Boemecke M."/>
            <person name="Steckel S."/>
            <person name="Bhattacharyya A."/>
            <person name="Lykidis A."/>
            <person name="Overbeek R."/>
            <person name="Klenk H.-P."/>
            <person name="Gunsalus R.P."/>
            <person name="Fritz H.-J."/>
            <person name="Gottschalk G."/>
        </authorList>
    </citation>
    <scope>NUCLEOTIDE SEQUENCE [LARGE SCALE GENOMIC DNA]</scope>
    <source>
        <strain>ATCC BAA-159 / DSM 3647 / Goe1 / Go1 / JCM 11833 / OCM 88</strain>
    </source>
</reference>
<organism>
    <name type="scientific">Methanosarcina mazei (strain ATCC BAA-159 / DSM 3647 / Goe1 / Go1 / JCM 11833 / OCM 88)</name>
    <name type="common">Methanosarcina frisia</name>
    <dbReference type="NCBI Taxonomy" id="192952"/>
    <lineage>
        <taxon>Archaea</taxon>
        <taxon>Methanobacteriati</taxon>
        <taxon>Methanobacteriota</taxon>
        <taxon>Stenosarchaea group</taxon>
        <taxon>Methanomicrobia</taxon>
        <taxon>Methanosarcinales</taxon>
        <taxon>Methanosarcinaceae</taxon>
        <taxon>Methanosarcina</taxon>
    </lineage>
</organism>
<proteinExistence type="inferred from homology"/>
<sequence>MAQNKIEKSEEDWKSVLTPEQYHVLRQKGTERPFSGNLYYNKEKGIYTCAACGQELFSSDTKFESGTGWPSFYDVISSDRVRLHEDNSYFMKRIEVVCSRCGSHLGHVFEDGPEPTGQRYCINSVSLGFTKEEDTGKEKE</sequence>
<keyword id="KW-0479">Metal-binding</keyword>
<keyword id="KW-0560">Oxidoreductase</keyword>
<keyword id="KW-0862">Zinc</keyword>
<feature type="chain" id="PRO_1000068279" description="Peptide methionine sulfoxide reductase MsrB">
    <location>
        <begin position="1"/>
        <end position="140"/>
    </location>
</feature>
<feature type="domain" description="MsrB" evidence="2">
    <location>
        <begin position="10"/>
        <end position="132"/>
    </location>
</feature>
<feature type="active site" description="Nucleophile" evidence="2">
    <location>
        <position position="121"/>
    </location>
</feature>
<feature type="binding site" evidence="2">
    <location>
        <position position="49"/>
    </location>
    <ligand>
        <name>Zn(2+)</name>
        <dbReference type="ChEBI" id="CHEBI:29105"/>
    </ligand>
</feature>
<feature type="binding site" evidence="2">
    <location>
        <position position="52"/>
    </location>
    <ligand>
        <name>Zn(2+)</name>
        <dbReference type="ChEBI" id="CHEBI:29105"/>
    </ligand>
</feature>
<feature type="binding site" evidence="2">
    <location>
        <position position="98"/>
    </location>
    <ligand>
        <name>Zn(2+)</name>
        <dbReference type="ChEBI" id="CHEBI:29105"/>
    </ligand>
</feature>
<feature type="binding site" evidence="2">
    <location>
        <position position="101"/>
    </location>
    <ligand>
        <name>Zn(2+)</name>
        <dbReference type="ChEBI" id="CHEBI:29105"/>
    </ligand>
</feature>